<comment type="function">
    <text evidence="1">Involved in degradation of plant cell walls. Hydrolyzes the feruloyl-arabinose ester bond in arabinoxylans, and the feruloyl-galactose ester bond in pectin. Active against paranitrophenyl-acetate, methyl ferulate and wheat arabinoxylan (By similarity).</text>
</comment>
<comment type="catalytic activity">
    <reaction>
        <text>feruloyl-polysaccharide + H2O = ferulate + polysaccharide.</text>
        <dbReference type="EC" id="3.1.1.73"/>
    </reaction>
</comment>
<comment type="subcellular location">
    <subcellularLocation>
        <location evidence="1">Secreted</location>
    </subcellularLocation>
</comment>
<comment type="similarity">
    <text evidence="3">Belongs to the faeC family.</text>
</comment>
<gene>
    <name type="primary">faeC-1</name>
    <name type="ORF">ACLA_055050</name>
</gene>
<reference key="1">
    <citation type="journal article" date="2008" name="PLoS Genet.">
        <title>Genomic islands in the pathogenic filamentous fungus Aspergillus fumigatus.</title>
        <authorList>
            <person name="Fedorova N.D."/>
            <person name="Khaldi N."/>
            <person name="Joardar V.S."/>
            <person name="Maiti R."/>
            <person name="Amedeo P."/>
            <person name="Anderson M.J."/>
            <person name="Crabtree J."/>
            <person name="Silva J.C."/>
            <person name="Badger J.H."/>
            <person name="Albarraq A."/>
            <person name="Angiuoli S."/>
            <person name="Bussey H."/>
            <person name="Bowyer P."/>
            <person name="Cotty P.J."/>
            <person name="Dyer P.S."/>
            <person name="Egan A."/>
            <person name="Galens K."/>
            <person name="Fraser-Liggett C.M."/>
            <person name="Haas B.J."/>
            <person name="Inman J.M."/>
            <person name="Kent R."/>
            <person name="Lemieux S."/>
            <person name="Malavazi I."/>
            <person name="Orvis J."/>
            <person name="Roemer T."/>
            <person name="Ronning C.M."/>
            <person name="Sundaram J.P."/>
            <person name="Sutton G."/>
            <person name="Turner G."/>
            <person name="Venter J.C."/>
            <person name="White O.R."/>
            <person name="Whitty B.R."/>
            <person name="Youngman P."/>
            <person name="Wolfe K.H."/>
            <person name="Goldman G.H."/>
            <person name="Wortman J.R."/>
            <person name="Jiang B."/>
            <person name="Denning D.W."/>
            <person name="Nierman W.C."/>
        </authorList>
    </citation>
    <scope>NUCLEOTIDE SEQUENCE [LARGE SCALE GENOMIC DNA]</scope>
    <source>
        <strain>ATCC 1007 / CBS 513.65 / DSM 816 / NCTC 3887 / NRRL 1 / QM 1276 / 107</strain>
    </source>
</reference>
<organism>
    <name type="scientific">Aspergillus clavatus (strain ATCC 1007 / CBS 513.65 / DSM 816 / NCTC 3887 / NRRL 1 / QM 1276 / 107)</name>
    <dbReference type="NCBI Taxonomy" id="344612"/>
    <lineage>
        <taxon>Eukaryota</taxon>
        <taxon>Fungi</taxon>
        <taxon>Dikarya</taxon>
        <taxon>Ascomycota</taxon>
        <taxon>Pezizomycotina</taxon>
        <taxon>Eurotiomycetes</taxon>
        <taxon>Eurotiomycetidae</taxon>
        <taxon>Eurotiales</taxon>
        <taxon>Aspergillaceae</taxon>
        <taxon>Aspergillus</taxon>
        <taxon>Aspergillus subgen. Fumigati</taxon>
    </lineage>
</organism>
<name>FAEC1_ASPCL</name>
<feature type="signal peptide" evidence="2">
    <location>
        <begin position="1"/>
        <end position="22"/>
    </location>
</feature>
<feature type="chain" id="PRO_0000394935" description="Probable feruloyl esterase C">
    <location>
        <begin position="23"/>
        <end position="272"/>
    </location>
</feature>
<evidence type="ECO:0000250" key="1"/>
<evidence type="ECO:0000255" key="2"/>
<evidence type="ECO:0000305" key="3"/>
<keyword id="KW-0119">Carbohydrate metabolism</keyword>
<keyword id="KW-0378">Hydrolase</keyword>
<keyword id="KW-0624">Polysaccharide degradation</keyword>
<keyword id="KW-1185">Reference proteome</keyword>
<keyword id="KW-0964">Secreted</keyword>
<keyword id="KW-0732">Signal</keyword>
<keyword id="KW-0858">Xylan degradation</keyword>
<proteinExistence type="inferred from homology"/>
<sequence>MLPTILYSAILALSALTPSALAETRSSGCGKHPSLANGVIHLNGREYILKLPDRYDNNHAYHLVFGLHWRGGNMQNVANGESIQPWYGLETRAQGSTIFIAPNGKNAGWANNGGEDVAFIDAIIKQVEADLCVDQSSRFATGFSWGGGMSYSLACSRAKQFKAVSVLSGGVISGCDGGHDPIAYLGIHGINDGVLPFNGGVGLAQKFVQNNGCQQANIGAPPSGSKSSVRTDFKGCSKPVSFIAYDGGHDSAPLGVGSSLAPDATWKFFMAA</sequence>
<accession>A1C9D4</accession>
<dbReference type="EC" id="3.1.1.73"/>
<dbReference type="EMBL" id="DS027048">
    <property type="protein sequence ID" value="EAW13458.1"/>
    <property type="molecule type" value="Genomic_DNA"/>
</dbReference>
<dbReference type="RefSeq" id="XP_001274884.1">
    <property type="nucleotide sequence ID" value="XM_001274883.1"/>
</dbReference>
<dbReference type="SMR" id="A1C9D4"/>
<dbReference type="STRING" id="344612.A1C9D4"/>
<dbReference type="ESTHER" id="aspcl-faec1">
    <property type="family name" value="FaeC"/>
</dbReference>
<dbReference type="EnsemblFungi" id="EAW13458">
    <property type="protein sequence ID" value="EAW13458"/>
    <property type="gene ID" value="ACLA_055050"/>
</dbReference>
<dbReference type="GeneID" id="4706967"/>
<dbReference type="KEGG" id="act:ACLA_055050"/>
<dbReference type="VEuPathDB" id="FungiDB:ACLA_055050"/>
<dbReference type="eggNOG" id="ENOG502SMEI">
    <property type="taxonomic scope" value="Eukaryota"/>
</dbReference>
<dbReference type="HOGENOM" id="CLU_027551_2_0_1"/>
<dbReference type="OMA" id="IHGINDG"/>
<dbReference type="OrthoDB" id="424610at2759"/>
<dbReference type="Proteomes" id="UP000006701">
    <property type="component" value="Unassembled WGS sequence"/>
</dbReference>
<dbReference type="GO" id="GO:0005576">
    <property type="term" value="C:extracellular region"/>
    <property type="evidence" value="ECO:0007669"/>
    <property type="project" value="UniProtKB-SubCell"/>
</dbReference>
<dbReference type="GO" id="GO:0030600">
    <property type="term" value="F:feruloyl esterase activity"/>
    <property type="evidence" value="ECO:0007669"/>
    <property type="project" value="UniProtKB-EC"/>
</dbReference>
<dbReference type="GO" id="GO:0045493">
    <property type="term" value="P:xylan catabolic process"/>
    <property type="evidence" value="ECO:0007669"/>
    <property type="project" value="UniProtKB-KW"/>
</dbReference>
<dbReference type="Gene3D" id="3.40.50.1820">
    <property type="entry name" value="alpha/beta hydrolase"/>
    <property type="match status" value="1"/>
</dbReference>
<dbReference type="InterPro" id="IPR029058">
    <property type="entry name" value="AB_hydrolase_fold"/>
</dbReference>
<dbReference type="InterPro" id="IPR043595">
    <property type="entry name" value="FaeB/C/D"/>
</dbReference>
<dbReference type="PANTHER" id="PTHR38050">
    <property type="match status" value="1"/>
</dbReference>
<dbReference type="PANTHER" id="PTHR38050:SF1">
    <property type="entry name" value="FERULOYL ESTERASE C"/>
    <property type="match status" value="1"/>
</dbReference>
<dbReference type="SUPFAM" id="SSF53474">
    <property type="entry name" value="alpha/beta-Hydrolases"/>
    <property type="match status" value="1"/>
</dbReference>
<protein>
    <recommendedName>
        <fullName>Probable feruloyl esterase C</fullName>
        <ecNumber>3.1.1.73</ecNumber>
    </recommendedName>
    <alternativeName>
        <fullName>Ferulic acid esterase C-1</fullName>
    </alternativeName>
</protein>